<organism>
    <name type="scientific">Saccharolobus islandicus (strain M.16.27)</name>
    <name type="common">Sulfolobus islandicus</name>
    <dbReference type="NCBI Taxonomy" id="427318"/>
    <lineage>
        <taxon>Archaea</taxon>
        <taxon>Thermoproteota</taxon>
        <taxon>Thermoprotei</taxon>
        <taxon>Sulfolobales</taxon>
        <taxon>Sulfolobaceae</taxon>
        <taxon>Saccharolobus</taxon>
    </lineage>
</organism>
<feature type="chain" id="PRO_1000206437" description="Small ribosomal subunit protein eS4">
    <location>
        <begin position="1"/>
        <end position="239"/>
    </location>
</feature>
<feature type="domain" description="S4 RNA-binding" evidence="1">
    <location>
        <begin position="37"/>
        <end position="99"/>
    </location>
</feature>
<gene>
    <name evidence="1" type="primary">rps4e</name>
    <name type="ordered locus">M1627_1482</name>
</gene>
<comment type="similarity">
    <text evidence="1">Belongs to the eukaryotic ribosomal protein eS4 family.</text>
</comment>
<sequence>MAHITRFETPWFLVISKKQYKWTVRPNAGPHPIEKSIPLAVVIRDYLKLAETVREAKHIIFDGKVLVDGKVRKDYKYPVGLMDIVSIPSADLYFRVIPDNVRFMRLSKISADEAHYKYVRIMNKTTVKGGSIQLNLEDGRNILVDKETAKSFKTLMTLKIELPSQNIVDSFIISEGSYAIFVGGKNVGIHGVVKNINLSKFKSRKYSVITLESKDGNTYQTNLMNVMSIGREKSDMRVD</sequence>
<reference key="1">
    <citation type="journal article" date="2009" name="Proc. Natl. Acad. Sci. U.S.A.">
        <title>Biogeography of the Sulfolobus islandicus pan-genome.</title>
        <authorList>
            <person name="Reno M.L."/>
            <person name="Held N.L."/>
            <person name="Fields C.J."/>
            <person name="Burke P.V."/>
            <person name="Whitaker R.J."/>
        </authorList>
    </citation>
    <scope>NUCLEOTIDE SEQUENCE [LARGE SCALE GENOMIC DNA]</scope>
    <source>
        <strain>M.16.27</strain>
    </source>
</reference>
<name>RS4E_SACI3</name>
<proteinExistence type="inferred from homology"/>
<accession>C3N5T9</accession>
<evidence type="ECO:0000255" key="1">
    <source>
        <dbReference type="HAMAP-Rule" id="MF_00485"/>
    </source>
</evidence>
<evidence type="ECO:0000305" key="2"/>
<keyword id="KW-0687">Ribonucleoprotein</keyword>
<keyword id="KW-0689">Ribosomal protein</keyword>
<keyword id="KW-0694">RNA-binding</keyword>
<keyword id="KW-0699">rRNA-binding</keyword>
<dbReference type="EMBL" id="CP001401">
    <property type="protein sequence ID" value="ACP55364.1"/>
    <property type="molecule type" value="Genomic_DNA"/>
</dbReference>
<dbReference type="RefSeq" id="WP_012711430.1">
    <property type="nucleotide sequence ID" value="NC_012632.1"/>
</dbReference>
<dbReference type="SMR" id="C3N5T9"/>
<dbReference type="KEGG" id="sim:M1627_1482"/>
<dbReference type="HOGENOM" id="CLU_060400_0_0_2"/>
<dbReference type="Proteomes" id="UP000002307">
    <property type="component" value="Chromosome"/>
</dbReference>
<dbReference type="GO" id="GO:0022627">
    <property type="term" value="C:cytosolic small ribosomal subunit"/>
    <property type="evidence" value="ECO:0007669"/>
    <property type="project" value="TreeGrafter"/>
</dbReference>
<dbReference type="GO" id="GO:0019843">
    <property type="term" value="F:rRNA binding"/>
    <property type="evidence" value="ECO:0007669"/>
    <property type="project" value="UniProtKB-KW"/>
</dbReference>
<dbReference type="GO" id="GO:0003735">
    <property type="term" value="F:structural constituent of ribosome"/>
    <property type="evidence" value="ECO:0007669"/>
    <property type="project" value="InterPro"/>
</dbReference>
<dbReference type="GO" id="GO:0006412">
    <property type="term" value="P:translation"/>
    <property type="evidence" value="ECO:0007669"/>
    <property type="project" value="UniProtKB-UniRule"/>
</dbReference>
<dbReference type="CDD" id="cd06087">
    <property type="entry name" value="KOW_RPS4"/>
    <property type="match status" value="1"/>
</dbReference>
<dbReference type="CDD" id="cd00165">
    <property type="entry name" value="S4"/>
    <property type="match status" value="1"/>
</dbReference>
<dbReference type="FunFam" id="2.30.30.30:FF:000069">
    <property type="entry name" value="30S ribosomal protein S4e"/>
    <property type="match status" value="1"/>
</dbReference>
<dbReference type="FunFam" id="3.10.290.10:FF:000002">
    <property type="entry name" value="40S ribosomal protein S4"/>
    <property type="match status" value="1"/>
</dbReference>
<dbReference type="Gene3D" id="2.30.30.30">
    <property type="match status" value="1"/>
</dbReference>
<dbReference type="Gene3D" id="2.40.50.740">
    <property type="match status" value="1"/>
</dbReference>
<dbReference type="Gene3D" id="3.10.290.10">
    <property type="entry name" value="RNA-binding S4 domain"/>
    <property type="match status" value="1"/>
</dbReference>
<dbReference type="HAMAP" id="MF_00485">
    <property type="entry name" value="Ribosomal_eS4"/>
    <property type="match status" value="1"/>
</dbReference>
<dbReference type="InterPro" id="IPR014722">
    <property type="entry name" value="Rib_uL2_dom2"/>
</dbReference>
<dbReference type="InterPro" id="IPR000876">
    <property type="entry name" value="Ribosomal_eS4"/>
</dbReference>
<dbReference type="InterPro" id="IPR013845">
    <property type="entry name" value="Ribosomal_eS4_central_region"/>
</dbReference>
<dbReference type="InterPro" id="IPR038237">
    <property type="entry name" value="Ribosomal_eS4_central_sf"/>
</dbReference>
<dbReference type="InterPro" id="IPR041982">
    <property type="entry name" value="Ribosomal_eS4_KOW"/>
</dbReference>
<dbReference type="InterPro" id="IPR002942">
    <property type="entry name" value="S4_RNA-bd"/>
</dbReference>
<dbReference type="InterPro" id="IPR036986">
    <property type="entry name" value="S4_RNA-bd_sf"/>
</dbReference>
<dbReference type="NCBIfam" id="NF003312">
    <property type="entry name" value="PRK04313.1"/>
    <property type="match status" value="1"/>
</dbReference>
<dbReference type="PANTHER" id="PTHR11581">
    <property type="entry name" value="30S/40S RIBOSOMAL PROTEIN S4"/>
    <property type="match status" value="1"/>
</dbReference>
<dbReference type="PANTHER" id="PTHR11581:SF0">
    <property type="entry name" value="SMALL RIBOSOMAL SUBUNIT PROTEIN ES4"/>
    <property type="match status" value="1"/>
</dbReference>
<dbReference type="Pfam" id="PF00900">
    <property type="entry name" value="Ribosomal_S4e"/>
    <property type="match status" value="1"/>
</dbReference>
<dbReference type="Pfam" id="PF01479">
    <property type="entry name" value="S4"/>
    <property type="match status" value="1"/>
</dbReference>
<dbReference type="PIRSF" id="PIRSF002116">
    <property type="entry name" value="Ribosomal_S4"/>
    <property type="match status" value="1"/>
</dbReference>
<dbReference type="SMART" id="SM00363">
    <property type="entry name" value="S4"/>
    <property type="match status" value="1"/>
</dbReference>
<dbReference type="SUPFAM" id="SSF55174">
    <property type="entry name" value="Alpha-L RNA-binding motif"/>
    <property type="match status" value="1"/>
</dbReference>
<dbReference type="PROSITE" id="PS50889">
    <property type="entry name" value="S4"/>
    <property type="match status" value="1"/>
</dbReference>
<protein>
    <recommendedName>
        <fullName evidence="1">Small ribosomal subunit protein eS4</fullName>
    </recommendedName>
    <alternativeName>
        <fullName evidence="2">30S ribosomal protein S4e</fullName>
    </alternativeName>
</protein>